<protein>
    <recommendedName>
        <fullName>Acyl-coenzyme A oxidase 4</fullName>
        <shortName>Acyl-CoA oxidase 4</shortName>
        <ecNumber>1.3.3.6</ecNumber>
    </recommendedName>
    <alternativeName>
        <fullName>PXP-4</fullName>
    </alternativeName>
    <alternativeName>
        <fullName>Peroxisomal fatty acyl-CoA oxidase</fullName>
    </alternativeName>
</protein>
<name>ACOX4_CANTR</name>
<accession>P06598</accession>
<accession>P11355</accession>
<gene>
    <name type="primary">POX4</name>
    <name type="synonym">AOX</name>
</gene>
<evidence type="ECO:0000256" key="1">
    <source>
        <dbReference type="SAM" id="MobiDB-lite"/>
    </source>
</evidence>
<evidence type="ECO:0000305" key="2"/>
<organism>
    <name type="scientific">Candida tropicalis</name>
    <name type="common">Yeast</name>
    <dbReference type="NCBI Taxonomy" id="5482"/>
    <lineage>
        <taxon>Eukaryota</taxon>
        <taxon>Fungi</taxon>
        <taxon>Dikarya</taxon>
        <taxon>Ascomycota</taxon>
        <taxon>Saccharomycotina</taxon>
        <taxon>Pichiomycetes</taxon>
        <taxon>Debaryomycetaceae</taxon>
        <taxon>Candida/Lodderomyces clade</taxon>
        <taxon>Candida</taxon>
    </lineage>
</organism>
<feature type="initiator methionine" description="Removed">
    <location>
        <position position="1"/>
    </location>
</feature>
<feature type="chain" id="PRO_0000204696" description="Acyl-coenzyme A oxidase 4">
    <location>
        <begin position="2"/>
        <end position="709"/>
    </location>
</feature>
<feature type="region of interest" description="Disordered" evidence="1">
    <location>
        <begin position="1"/>
        <end position="29"/>
    </location>
</feature>
<feature type="compositionally biased region" description="Polar residues" evidence="1">
    <location>
        <begin position="1"/>
        <end position="12"/>
    </location>
</feature>
<feature type="sequence conflict" description="In Ref. 4; CAA68660." evidence="2" ref="4">
    <original>Q</original>
    <variation>E</variation>
    <location>
        <position position="217"/>
    </location>
</feature>
<feature type="sequence conflict" description="In Ref. 3; AAA34362 and 4; CAA68660." evidence="2" ref="3 4">
    <original>P</original>
    <variation>A</variation>
    <location>
        <position position="246"/>
    </location>
</feature>
<feature type="sequence conflict" description="In Ref. 3; AAA34362." evidence="2" ref="3">
    <original>N</original>
    <variation>K</variation>
    <location>
        <position position="336"/>
    </location>
</feature>
<feature type="sequence conflict" description="In Ref. 3; AAA34362 and 4; CAA68660/CAA68661." evidence="2" ref="3 4">
    <original>FVPPMSSPSVPSRLNTPSRPPWSNWTSPLKRTTPRL</original>
    <variation>LAAAYVISAGALKVEDTIHNTLAELDAAVEKNDTKA</variation>
    <location>
        <begin position="359"/>
        <end position="394"/>
    </location>
</feature>
<feature type="sequence conflict" description="In Ref. 3; AAA34362." evidence="2" ref="3">
    <original>H</original>
    <variation>Y</variation>
    <location>
        <position position="436"/>
    </location>
</feature>
<feature type="sequence conflict" description="In Ref. 3; AAA34362." evidence="2" ref="3">
    <original>G</original>
    <variation>A</variation>
    <location>
        <position position="463"/>
    </location>
</feature>
<feature type="sequence conflict" description="In Ref. 3; AAA34362." evidence="2" ref="3">
    <original>E</original>
    <variation>D</variation>
    <location>
        <position position="496"/>
    </location>
</feature>
<feature type="sequence conflict" description="In Ref. 3; AAA34362." evidence="2" ref="3">
    <original>ELA</original>
    <variation>DLV</variation>
    <location>
        <begin position="577"/>
        <end position="579"/>
    </location>
</feature>
<feature type="sequence conflict" description="In Ref. 3; AAA34362 and 4; CAA68660/CAA68661/CAA68662." evidence="2" ref="3 4">
    <original>Q</original>
    <variation>E</variation>
    <location>
        <position position="698"/>
    </location>
</feature>
<dbReference type="EC" id="1.3.3.6"/>
<dbReference type="EMBL" id="M16193">
    <property type="protein sequence ID" value="AAA34322.2"/>
    <property type="molecule type" value="Genomic_DNA"/>
</dbReference>
<dbReference type="EMBL" id="M12160">
    <property type="protein sequence ID" value="AAA34362.1"/>
    <property type="molecule type" value="Genomic_DNA"/>
</dbReference>
<dbReference type="EMBL" id="Y00623">
    <property type="protein sequence ID" value="CAA68660.1"/>
    <property type="molecule type" value="mRNA"/>
</dbReference>
<dbReference type="EMBL" id="Y00623">
    <property type="protein sequence ID" value="CAA68661.1"/>
    <property type="status" value="ALT_INIT"/>
    <property type="molecule type" value="mRNA"/>
</dbReference>
<dbReference type="EMBL" id="Y00623">
    <property type="protein sequence ID" value="CAA68662.1"/>
    <property type="status" value="ALT_INIT"/>
    <property type="molecule type" value="mRNA"/>
</dbReference>
<dbReference type="PIR" id="A25123">
    <property type="entry name" value="OXCKX4"/>
</dbReference>
<dbReference type="PIR" id="A28584">
    <property type="entry name" value="OXCKAX"/>
</dbReference>
<dbReference type="PIR" id="A29047">
    <property type="entry name" value="OXCKX"/>
</dbReference>
<dbReference type="SMR" id="P06598"/>
<dbReference type="VEuPathDB" id="FungiDB:CTMYA2_049290"/>
<dbReference type="VEuPathDB" id="FungiDB:CTRG_02377"/>
<dbReference type="SABIO-RK" id="P06598"/>
<dbReference type="UniPathway" id="UPA00661"/>
<dbReference type="GO" id="GO:0005777">
    <property type="term" value="C:peroxisome"/>
    <property type="evidence" value="ECO:0007669"/>
    <property type="project" value="UniProtKB-SubCell"/>
</dbReference>
<dbReference type="GO" id="GO:0003997">
    <property type="term" value="F:acyl-CoA oxidase activity"/>
    <property type="evidence" value="ECO:0007669"/>
    <property type="project" value="UniProtKB-EC"/>
</dbReference>
<dbReference type="GO" id="GO:0071949">
    <property type="term" value="F:FAD binding"/>
    <property type="evidence" value="ECO:0007669"/>
    <property type="project" value="InterPro"/>
</dbReference>
<dbReference type="GO" id="GO:0005504">
    <property type="term" value="F:fatty acid binding"/>
    <property type="evidence" value="ECO:0007669"/>
    <property type="project" value="TreeGrafter"/>
</dbReference>
<dbReference type="GO" id="GO:0033540">
    <property type="term" value="P:fatty acid beta-oxidation using acyl-CoA oxidase"/>
    <property type="evidence" value="ECO:0007669"/>
    <property type="project" value="UniProtKB-UniPathway"/>
</dbReference>
<dbReference type="GO" id="GO:0055088">
    <property type="term" value="P:lipid homeostasis"/>
    <property type="evidence" value="ECO:0007669"/>
    <property type="project" value="TreeGrafter"/>
</dbReference>
<dbReference type="FunFam" id="1.10.540.10:FF:000018">
    <property type="entry name" value="Acyl-coenzyme A oxidase"/>
    <property type="match status" value="1"/>
</dbReference>
<dbReference type="FunFam" id="1.20.140.10:FF:000015">
    <property type="entry name" value="Acyl-coenzyme A oxidase"/>
    <property type="match status" value="1"/>
</dbReference>
<dbReference type="FunFam" id="1.20.140.10:FF:000041">
    <property type="entry name" value="Acyl-coenzyme A oxidase"/>
    <property type="match status" value="1"/>
</dbReference>
<dbReference type="FunFam" id="2.40.110.10:FF:000003">
    <property type="entry name" value="Acyl-coenzyme A oxidase"/>
    <property type="match status" value="1"/>
</dbReference>
<dbReference type="Gene3D" id="1.10.540.10">
    <property type="entry name" value="Acyl-CoA dehydrogenase/oxidase, N-terminal domain"/>
    <property type="match status" value="1"/>
</dbReference>
<dbReference type="Gene3D" id="2.40.110.10">
    <property type="entry name" value="Butyryl-CoA Dehydrogenase, subunit A, domain 2"/>
    <property type="match status" value="1"/>
</dbReference>
<dbReference type="Gene3D" id="1.20.140.10">
    <property type="entry name" value="Butyryl-CoA Dehydrogenase, subunit A, domain 3"/>
    <property type="match status" value="2"/>
</dbReference>
<dbReference type="InterPro" id="IPR055060">
    <property type="entry name" value="ACOX_C_alpha1"/>
</dbReference>
<dbReference type="InterPro" id="IPR029320">
    <property type="entry name" value="Acyl-CoA_ox_N"/>
</dbReference>
<dbReference type="InterPro" id="IPR006091">
    <property type="entry name" value="Acyl-CoA_Oxase/DH_mid-dom"/>
</dbReference>
<dbReference type="InterPro" id="IPR046373">
    <property type="entry name" value="Acyl-CoA_Oxase/DH_mid-dom_sf"/>
</dbReference>
<dbReference type="InterPro" id="IPR012258">
    <property type="entry name" value="Acyl-CoA_oxidase"/>
</dbReference>
<dbReference type="InterPro" id="IPR002655">
    <property type="entry name" value="Acyl-CoA_oxidase_C"/>
</dbReference>
<dbReference type="InterPro" id="IPR036250">
    <property type="entry name" value="AcylCo_DH-like_C"/>
</dbReference>
<dbReference type="InterPro" id="IPR037069">
    <property type="entry name" value="AcylCoA_DH/ox_N_sf"/>
</dbReference>
<dbReference type="InterPro" id="IPR009100">
    <property type="entry name" value="AcylCoA_DH/oxidase_NM_dom_sf"/>
</dbReference>
<dbReference type="PANTHER" id="PTHR10909:SF352">
    <property type="entry name" value="ACYL-COENZYME A OXIDASE-LIKE PROTEIN"/>
    <property type="match status" value="1"/>
</dbReference>
<dbReference type="PANTHER" id="PTHR10909">
    <property type="entry name" value="ELECTRON TRANSPORT OXIDOREDUCTASE"/>
    <property type="match status" value="1"/>
</dbReference>
<dbReference type="Pfam" id="PF01756">
    <property type="entry name" value="ACOX"/>
    <property type="match status" value="1"/>
</dbReference>
<dbReference type="Pfam" id="PF22924">
    <property type="entry name" value="ACOX_C_alpha1"/>
    <property type="match status" value="1"/>
</dbReference>
<dbReference type="Pfam" id="PF02770">
    <property type="entry name" value="Acyl-CoA_dh_M"/>
    <property type="match status" value="1"/>
</dbReference>
<dbReference type="Pfam" id="PF14749">
    <property type="entry name" value="Acyl-CoA_ox_N"/>
    <property type="match status" value="1"/>
</dbReference>
<dbReference type="PIRSF" id="PIRSF000168">
    <property type="entry name" value="Acyl-CoA_oxidase"/>
    <property type="match status" value="1"/>
</dbReference>
<dbReference type="SUPFAM" id="SSF47203">
    <property type="entry name" value="Acyl-CoA dehydrogenase C-terminal domain-like"/>
    <property type="match status" value="2"/>
</dbReference>
<dbReference type="SUPFAM" id="SSF56645">
    <property type="entry name" value="Acyl-CoA dehydrogenase NM domain-like"/>
    <property type="match status" value="1"/>
</dbReference>
<comment type="catalytic activity">
    <reaction>
        <text>a 2,3-saturated acyl-CoA + O2 = a (2E)-enoyl-CoA + H2O2</text>
        <dbReference type="Rhea" id="RHEA:38959"/>
        <dbReference type="ChEBI" id="CHEBI:15379"/>
        <dbReference type="ChEBI" id="CHEBI:16240"/>
        <dbReference type="ChEBI" id="CHEBI:58856"/>
        <dbReference type="ChEBI" id="CHEBI:65111"/>
        <dbReference type="EC" id="1.3.3.6"/>
    </reaction>
</comment>
<comment type="cofactor">
    <cofactor>
        <name>FAD</name>
        <dbReference type="ChEBI" id="CHEBI:57692"/>
    </cofactor>
</comment>
<comment type="pathway">
    <text>Lipid metabolism; peroxisomal fatty acid beta-oxidation.</text>
</comment>
<comment type="subunit">
    <text>Homooctamer.</text>
</comment>
<comment type="subcellular location">
    <subcellularLocation>
        <location>Peroxisome</location>
    </subcellularLocation>
</comment>
<comment type="similarity">
    <text evidence="2">Belongs to the acyl-CoA oxidase family.</text>
</comment>
<comment type="sequence caution" evidence="2">
    <conflict type="erroneous initiation">
        <sequence resource="EMBL-CDS" id="CAA68661"/>
    </conflict>
</comment>
<comment type="sequence caution" evidence="2">
    <conflict type="erroneous initiation">
        <sequence resource="EMBL-CDS" id="CAA68662"/>
    </conflict>
</comment>
<sequence>MTFTKKNVSVSQGPDPRSSIQKERDSSKWNPQQMNYFLEGSVERSELMKALAQQMERDPILFTDGSYYDLTKDQQRELTAVKINRIARYREQESIDTFNKRLSLIGIFDPQVGTRIGVNLGLFLSCIRGNGTTSQLNYWANEKETADVKGIYGCFGMTELAHGSNVAGLETTATFDKESDEFVINTPHIGATKWWIGGAAHSATHCSVYARLIVDGQDYGVKTFVVPLRDSNHDLMPGVTVGDIGPKMGRDGIDNGWIQFSNVRIPRFFMLQKFCKVSAEGEVTLPPLEQLSYSALLGGRVMMVLDSYRMLARMSTIALRYAIGRRQFKGDNVDPNDPNALETQLIDYPLHQKRLFPYFVPPMSSPSVPSRLNTPSRPPWSNWTSPLKRTTPRLIFKSIDDMKSLFVDSGSLKSTATWLGAEAIDQCRQACGGHGHSSYNGFGKAYNDWVVQCTWEGDNNVLGMSVGKPIVKQVISIEDAGKTVRGSTAFLNQLKEYTGSNSSKVVLNTVADLDDIKTVIKAIEVAIIRLSQEAASIVKKESFDYVGAELVQLSKLKAHHYLLTEYIRRIDTFDQKELAPYLITLGKLYAATIVLDRFAGVFLTFNVASTEAITALASVQIPKLCAEVRPNVVAYTDSFQQSDMIVNSAIGRYDGDIYENYFDLVKLQNPPSKTKAPYSDALEAMLNRPTLDERERFQKSDETAAILSK</sequence>
<reference key="1">
    <citation type="journal article" date="1987" name="Gene">
        <title>The primary structure of a peroxisomal fatty acyl-CoA oxidase from the yeast Candida tropicalis pK233.</title>
        <authorList>
            <person name="Murray W.W."/>
            <person name="Rachubinski R.A."/>
        </authorList>
    </citation>
    <scope>NUCLEOTIDE SEQUENCE [GENOMIC DNA]</scope>
    <source>
        <strain>ATCC 20336 / pK233 / NCYC 997</strain>
    </source>
</reference>
<reference key="2">
    <citation type="submission" date="2000-04" db="EMBL/GenBank/DDBJ databases">
        <authorList>
            <person name="Murray W.W."/>
            <person name="Rachubinski R.A."/>
        </authorList>
    </citation>
    <scope>SEQUENCE REVISION TO 367; 381 AND 385</scope>
</reference>
<reference key="3">
    <citation type="journal article" date="1986" name="Proc. Natl. Acad. Sci. U.S.A.">
        <title>Two acyl-coenzyme A oxidases in peroxisomes of the yeast Candida tropicalis: primary structures deduced from genomic DNA sequence.</title>
        <authorList>
            <person name="Okazaki K."/>
            <person name="Takechi T."/>
            <person name="Kambara N."/>
            <person name="Fukui S."/>
            <person name="Kubota I."/>
            <person name="Kamiryo T."/>
        </authorList>
    </citation>
    <scope>NUCLEOTIDE SEQUENCE [GENOMIC DNA]</scope>
    <source>
        <strain>ATCC 20336 / pK233 / NCYC 997</strain>
    </source>
</reference>
<reference key="4">
    <citation type="journal article" date="1987" name="J. Cell Biol.">
        <title>Import of the carboxy-terminal portion of acyl-CoA oxidase into peroxisomes of Candida tropicalis.</title>
        <authorList>
            <person name="Small G.M."/>
            <person name="Lazarow P.B."/>
        </authorList>
    </citation>
    <scope>NUCLEOTIDE SEQUENCE [MRNA] OF 208-709</scope>
    <source>
        <strain>RR1</strain>
    </source>
</reference>
<proteinExistence type="evidence at transcript level"/>
<keyword id="KW-0274">FAD</keyword>
<keyword id="KW-0276">Fatty acid metabolism</keyword>
<keyword id="KW-0285">Flavoprotein</keyword>
<keyword id="KW-0443">Lipid metabolism</keyword>
<keyword id="KW-0560">Oxidoreductase</keyword>
<keyword id="KW-0576">Peroxisome</keyword>